<dbReference type="EMBL" id="DQ396875">
    <property type="protein sequence ID" value="ABD48287.1"/>
    <property type="molecule type" value="Genomic_DNA"/>
</dbReference>
<dbReference type="RefSeq" id="YP_636004.1">
    <property type="nucleotide sequence ID" value="NC_008101.1"/>
</dbReference>
<dbReference type="SMR" id="Q1KVS0"/>
<dbReference type="GeneID" id="4099778"/>
<dbReference type="GO" id="GO:0009507">
    <property type="term" value="C:chloroplast"/>
    <property type="evidence" value="ECO:0007669"/>
    <property type="project" value="UniProtKB-SubCell"/>
</dbReference>
<dbReference type="GO" id="GO:1990904">
    <property type="term" value="C:ribonucleoprotein complex"/>
    <property type="evidence" value="ECO:0007669"/>
    <property type="project" value="UniProtKB-KW"/>
</dbReference>
<dbReference type="GO" id="GO:0005840">
    <property type="term" value="C:ribosome"/>
    <property type="evidence" value="ECO:0007669"/>
    <property type="project" value="UniProtKB-KW"/>
</dbReference>
<dbReference type="GO" id="GO:0003735">
    <property type="term" value="F:structural constituent of ribosome"/>
    <property type="evidence" value="ECO:0007669"/>
    <property type="project" value="InterPro"/>
</dbReference>
<dbReference type="GO" id="GO:0006412">
    <property type="term" value="P:translation"/>
    <property type="evidence" value="ECO:0007669"/>
    <property type="project" value="UniProtKB-UniRule"/>
</dbReference>
<dbReference type="HAMAP" id="MF_00251">
    <property type="entry name" value="Ribosomal_bL36"/>
    <property type="match status" value="1"/>
</dbReference>
<dbReference type="InterPro" id="IPR000473">
    <property type="entry name" value="Ribosomal_bL36"/>
</dbReference>
<dbReference type="InterPro" id="IPR035977">
    <property type="entry name" value="Ribosomal_bL36_sp"/>
</dbReference>
<dbReference type="NCBIfam" id="TIGR01022">
    <property type="entry name" value="rpmJ_bact"/>
    <property type="match status" value="1"/>
</dbReference>
<dbReference type="PANTHER" id="PTHR42888">
    <property type="entry name" value="50S RIBOSOMAL PROTEIN L36, CHLOROPLASTIC"/>
    <property type="match status" value="1"/>
</dbReference>
<dbReference type="PANTHER" id="PTHR42888:SF1">
    <property type="entry name" value="LARGE RIBOSOMAL SUBUNIT PROTEIN BL36C"/>
    <property type="match status" value="1"/>
</dbReference>
<dbReference type="Pfam" id="PF00444">
    <property type="entry name" value="Ribosomal_L36"/>
    <property type="match status" value="1"/>
</dbReference>
<dbReference type="SUPFAM" id="SSF57840">
    <property type="entry name" value="Ribosomal protein L36"/>
    <property type="match status" value="1"/>
</dbReference>
<dbReference type="PROSITE" id="PS00828">
    <property type="entry name" value="RIBOSOMAL_L36"/>
    <property type="match status" value="1"/>
</dbReference>
<keyword id="KW-0150">Chloroplast</keyword>
<keyword id="KW-0934">Plastid</keyword>
<keyword id="KW-0687">Ribonucleoprotein</keyword>
<keyword id="KW-0689">Ribosomal protein</keyword>
<protein>
    <recommendedName>
        <fullName evidence="1">Large ribosomal subunit protein bL36c</fullName>
    </recommendedName>
    <alternativeName>
        <fullName evidence="2">50S ribosomal protein L36, chloroplastic</fullName>
    </alternativeName>
</protein>
<evidence type="ECO:0000255" key="1">
    <source>
        <dbReference type="HAMAP-Rule" id="MF_00251"/>
    </source>
</evidence>
<evidence type="ECO:0000305" key="2"/>
<gene>
    <name evidence="1" type="primary">rpl36</name>
</gene>
<feature type="chain" id="PRO_0000276833" description="Large ribosomal subunit protein bL36c">
    <location>
        <begin position="1"/>
        <end position="37"/>
    </location>
</feature>
<accession>Q1KVS0</accession>
<sequence length="37" mass="4313">MKVRSSVKKICTKCRLIRRKGTVMVICTNPKHKQRQG</sequence>
<reference key="1">
    <citation type="journal article" date="2006" name="BMC Evol. Biol.">
        <title>The complete chloroplast genome sequence of the chlorophycean green alga Scenedesmus obliquus reveals a compact gene organization and a biased distribution of genes on the two DNA strands.</title>
        <authorList>
            <person name="de Cambiaire J.-C."/>
            <person name="Otis C."/>
            <person name="Lemieux C."/>
            <person name="Turmel M."/>
        </authorList>
    </citation>
    <scope>NUCLEOTIDE SEQUENCE [LARGE SCALE GENOMIC DNA]</scope>
    <source>
        <strain>UTEX 393</strain>
    </source>
</reference>
<comment type="subcellular location">
    <subcellularLocation>
        <location>Plastid</location>
        <location>Chloroplast</location>
    </subcellularLocation>
</comment>
<comment type="similarity">
    <text evidence="1">Belongs to the bacterial ribosomal protein bL36 family.</text>
</comment>
<organism>
    <name type="scientific">Tetradesmus obliquus</name>
    <name type="common">Green alga</name>
    <name type="synonym">Acutodesmus obliquus</name>
    <dbReference type="NCBI Taxonomy" id="3088"/>
    <lineage>
        <taxon>Eukaryota</taxon>
        <taxon>Viridiplantae</taxon>
        <taxon>Chlorophyta</taxon>
        <taxon>core chlorophytes</taxon>
        <taxon>Chlorophyceae</taxon>
        <taxon>CS clade</taxon>
        <taxon>Sphaeropleales</taxon>
        <taxon>Scenedesmaceae</taxon>
        <taxon>Tetradesmus</taxon>
    </lineage>
</organism>
<proteinExistence type="inferred from homology"/>
<name>RK36_TETOB</name>
<geneLocation type="chloroplast"/>